<evidence type="ECO:0000255" key="1">
    <source>
        <dbReference type="HAMAP-Rule" id="MF_00693"/>
    </source>
</evidence>
<evidence type="ECO:0000256" key="2">
    <source>
        <dbReference type="SAM" id="MobiDB-lite"/>
    </source>
</evidence>
<evidence type="ECO:0000305" key="3"/>
<proteinExistence type="inferred from homology"/>
<name>Y2667_SALRD</name>
<protein>
    <recommendedName>
        <fullName evidence="1">Probable transcriptional regulatory protein SRU_2667</fullName>
    </recommendedName>
</protein>
<keyword id="KW-0963">Cytoplasm</keyword>
<keyword id="KW-0238">DNA-binding</keyword>
<keyword id="KW-1185">Reference proteome</keyword>
<keyword id="KW-0804">Transcription</keyword>
<keyword id="KW-0805">Transcription regulation</keyword>
<reference key="1">
    <citation type="journal article" date="2005" name="Proc. Natl. Acad. Sci. U.S.A.">
        <title>The genome of Salinibacter ruber: convergence and gene exchange among hyperhalophilic bacteria and archaea.</title>
        <authorList>
            <person name="Mongodin E.F."/>
            <person name="Nelson K.E."/>
            <person name="Daugherty S."/>
            <person name="DeBoy R.T."/>
            <person name="Wister J."/>
            <person name="Khouri H."/>
            <person name="Weidman J."/>
            <person name="Walsh D.A."/>
            <person name="Papke R.T."/>
            <person name="Sanchez Perez G."/>
            <person name="Sharma A.K."/>
            <person name="Nesbo C.L."/>
            <person name="MacLeod D."/>
            <person name="Bapteste E."/>
            <person name="Doolittle W.F."/>
            <person name="Charlebois R.L."/>
            <person name="Legault B."/>
            <person name="Rodriguez-Valera F."/>
        </authorList>
    </citation>
    <scope>NUCLEOTIDE SEQUENCE [LARGE SCALE GENOMIC DNA]</scope>
    <source>
        <strain>DSM 13855 / CECT 5946 / M31</strain>
    </source>
</reference>
<sequence>MAGHTRKWAKVKRKKQKDDRRKSKVWARLSQEIEKAAREGGGDPDANVALSQALERAREEDMAKDTIERAIKRGTGELEEEGREKVTYEGYAPHGVAVFVEGETENINRTVKDLRNLFSDHGGNLGKDGSVAYLFEQKGRFEIAADATDEMTLFEVAVEAGAEEVDETDGTYVVTTGRDAFADVGEALDEAGLPVEANALVRAPTTTVALAPDERDAVRGLIEKINDLRDVTSVYTTLEIDGTPLALGVDVASPAGH</sequence>
<gene>
    <name type="ordered locus">SRU_2667</name>
</gene>
<organism>
    <name type="scientific">Salinibacter ruber (strain DSM 13855 / M31)</name>
    <dbReference type="NCBI Taxonomy" id="309807"/>
    <lineage>
        <taxon>Bacteria</taxon>
        <taxon>Pseudomonadati</taxon>
        <taxon>Rhodothermota</taxon>
        <taxon>Rhodothermia</taxon>
        <taxon>Rhodothermales</taxon>
        <taxon>Salinibacteraceae</taxon>
        <taxon>Salinibacter</taxon>
    </lineage>
</organism>
<dbReference type="EMBL" id="CP000159">
    <property type="protein sequence ID" value="ABC44091.1"/>
    <property type="status" value="ALT_INIT"/>
    <property type="molecule type" value="Genomic_DNA"/>
</dbReference>
<dbReference type="RefSeq" id="WP_011405379.1">
    <property type="nucleotide sequence ID" value="NC_007677.1"/>
</dbReference>
<dbReference type="RefSeq" id="YP_446765.2">
    <property type="nucleotide sequence ID" value="NC_007677.1"/>
</dbReference>
<dbReference type="SMR" id="Q2RZ66"/>
<dbReference type="STRING" id="309807.SRU_2667"/>
<dbReference type="EnsemblBacteria" id="ABC44091">
    <property type="protein sequence ID" value="ABC44091"/>
    <property type="gene ID" value="SRU_2667"/>
</dbReference>
<dbReference type="KEGG" id="sru:SRU_2667"/>
<dbReference type="eggNOG" id="COG0217">
    <property type="taxonomic scope" value="Bacteria"/>
</dbReference>
<dbReference type="HOGENOM" id="CLU_062974_2_2_10"/>
<dbReference type="OrthoDB" id="9781053at2"/>
<dbReference type="Proteomes" id="UP000008674">
    <property type="component" value="Chromosome"/>
</dbReference>
<dbReference type="GO" id="GO:0005829">
    <property type="term" value="C:cytosol"/>
    <property type="evidence" value="ECO:0007669"/>
    <property type="project" value="TreeGrafter"/>
</dbReference>
<dbReference type="GO" id="GO:0003677">
    <property type="term" value="F:DNA binding"/>
    <property type="evidence" value="ECO:0007669"/>
    <property type="project" value="UniProtKB-UniRule"/>
</dbReference>
<dbReference type="GO" id="GO:0006355">
    <property type="term" value="P:regulation of DNA-templated transcription"/>
    <property type="evidence" value="ECO:0007669"/>
    <property type="project" value="UniProtKB-UniRule"/>
</dbReference>
<dbReference type="FunFam" id="1.10.10.200:FF:000002">
    <property type="entry name" value="Probable transcriptional regulatory protein CLM62_37755"/>
    <property type="match status" value="1"/>
</dbReference>
<dbReference type="Gene3D" id="1.10.10.200">
    <property type="match status" value="1"/>
</dbReference>
<dbReference type="Gene3D" id="3.30.70.980">
    <property type="match status" value="2"/>
</dbReference>
<dbReference type="HAMAP" id="MF_00693">
    <property type="entry name" value="Transcrip_reg_TACO1"/>
    <property type="match status" value="1"/>
</dbReference>
<dbReference type="InterPro" id="IPR017856">
    <property type="entry name" value="Integrase-like_N"/>
</dbReference>
<dbReference type="InterPro" id="IPR048300">
    <property type="entry name" value="TACO1_YebC-like_2nd/3rd_dom"/>
</dbReference>
<dbReference type="InterPro" id="IPR049083">
    <property type="entry name" value="TACO1_YebC_N"/>
</dbReference>
<dbReference type="InterPro" id="IPR002876">
    <property type="entry name" value="Transcrip_reg_TACO1-like"/>
</dbReference>
<dbReference type="InterPro" id="IPR026564">
    <property type="entry name" value="Transcrip_reg_TACO1-like_dom3"/>
</dbReference>
<dbReference type="InterPro" id="IPR029072">
    <property type="entry name" value="YebC-like"/>
</dbReference>
<dbReference type="NCBIfam" id="NF001030">
    <property type="entry name" value="PRK00110.1"/>
    <property type="match status" value="1"/>
</dbReference>
<dbReference type="NCBIfam" id="NF009044">
    <property type="entry name" value="PRK12378.1"/>
    <property type="match status" value="1"/>
</dbReference>
<dbReference type="NCBIfam" id="TIGR01033">
    <property type="entry name" value="YebC/PmpR family DNA-binding transcriptional regulator"/>
    <property type="match status" value="1"/>
</dbReference>
<dbReference type="PANTHER" id="PTHR12532:SF6">
    <property type="entry name" value="TRANSCRIPTIONAL REGULATORY PROTEIN YEBC-RELATED"/>
    <property type="match status" value="1"/>
</dbReference>
<dbReference type="PANTHER" id="PTHR12532">
    <property type="entry name" value="TRANSLATIONAL ACTIVATOR OF CYTOCHROME C OXIDASE 1"/>
    <property type="match status" value="1"/>
</dbReference>
<dbReference type="Pfam" id="PF20772">
    <property type="entry name" value="TACO1_YebC_N"/>
    <property type="match status" value="1"/>
</dbReference>
<dbReference type="Pfam" id="PF01709">
    <property type="entry name" value="Transcrip_reg"/>
    <property type="match status" value="1"/>
</dbReference>
<dbReference type="SUPFAM" id="SSF75625">
    <property type="entry name" value="YebC-like"/>
    <property type="match status" value="1"/>
</dbReference>
<accession>Q2RZ66</accession>
<comment type="subcellular location">
    <subcellularLocation>
        <location evidence="1">Cytoplasm</location>
    </subcellularLocation>
</comment>
<comment type="similarity">
    <text evidence="1">Belongs to the TACO1 family.</text>
</comment>
<comment type="sequence caution" evidence="3">
    <conflict type="erroneous initiation">
        <sequence resource="EMBL-CDS" id="ABC44091"/>
    </conflict>
</comment>
<feature type="chain" id="PRO_0000257125" description="Probable transcriptional regulatory protein SRU_2667">
    <location>
        <begin position="1"/>
        <end position="257"/>
    </location>
</feature>
<feature type="region of interest" description="Disordered" evidence="2">
    <location>
        <begin position="1"/>
        <end position="25"/>
    </location>
</feature>
<feature type="compositionally biased region" description="Basic residues" evidence="2">
    <location>
        <begin position="1"/>
        <end position="15"/>
    </location>
</feature>